<gene>
    <name evidence="1" type="primary">pheS</name>
    <name type="ordered locus">Ppha_0172</name>
</gene>
<accession>B4SB89</accession>
<dbReference type="EC" id="6.1.1.20" evidence="1"/>
<dbReference type="EMBL" id="CP001110">
    <property type="protein sequence ID" value="ACF42510.1"/>
    <property type="molecule type" value="Genomic_DNA"/>
</dbReference>
<dbReference type="RefSeq" id="WP_012507008.1">
    <property type="nucleotide sequence ID" value="NC_011060.1"/>
</dbReference>
<dbReference type="SMR" id="B4SB89"/>
<dbReference type="STRING" id="324925.Ppha_0172"/>
<dbReference type="KEGG" id="pph:Ppha_0172"/>
<dbReference type="eggNOG" id="COG0016">
    <property type="taxonomic scope" value="Bacteria"/>
</dbReference>
<dbReference type="HOGENOM" id="CLU_025086_0_1_10"/>
<dbReference type="OrthoDB" id="9800719at2"/>
<dbReference type="Proteomes" id="UP000002724">
    <property type="component" value="Chromosome"/>
</dbReference>
<dbReference type="GO" id="GO:0005737">
    <property type="term" value="C:cytoplasm"/>
    <property type="evidence" value="ECO:0007669"/>
    <property type="project" value="UniProtKB-SubCell"/>
</dbReference>
<dbReference type="GO" id="GO:0005524">
    <property type="term" value="F:ATP binding"/>
    <property type="evidence" value="ECO:0007669"/>
    <property type="project" value="UniProtKB-UniRule"/>
</dbReference>
<dbReference type="GO" id="GO:0000287">
    <property type="term" value="F:magnesium ion binding"/>
    <property type="evidence" value="ECO:0007669"/>
    <property type="project" value="UniProtKB-UniRule"/>
</dbReference>
<dbReference type="GO" id="GO:0004826">
    <property type="term" value="F:phenylalanine-tRNA ligase activity"/>
    <property type="evidence" value="ECO:0007669"/>
    <property type="project" value="UniProtKB-UniRule"/>
</dbReference>
<dbReference type="GO" id="GO:0000049">
    <property type="term" value="F:tRNA binding"/>
    <property type="evidence" value="ECO:0007669"/>
    <property type="project" value="InterPro"/>
</dbReference>
<dbReference type="GO" id="GO:0006432">
    <property type="term" value="P:phenylalanyl-tRNA aminoacylation"/>
    <property type="evidence" value="ECO:0007669"/>
    <property type="project" value="UniProtKB-UniRule"/>
</dbReference>
<dbReference type="CDD" id="cd00496">
    <property type="entry name" value="PheRS_alpha_core"/>
    <property type="match status" value="1"/>
</dbReference>
<dbReference type="FunFam" id="3.30.930.10:FF:000089">
    <property type="entry name" value="Phenylalanine--tRNA ligase alpha subunit"/>
    <property type="match status" value="1"/>
</dbReference>
<dbReference type="Gene3D" id="3.30.930.10">
    <property type="entry name" value="Bira Bifunctional Protein, Domain 2"/>
    <property type="match status" value="1"/>
</dbReference>
<dbReference type="HAMAP" id="MF_00281">
    <property type="entry name" value="Phe_tRNA_synth_alpha1"/>
    <property type="match status" value="1"/>
</dbReference>
<dbReference type="InterPro" id="IPR006195">
    <property type="entry name" value="aa-tRNA-synth_II"/>
</dbReference>
<dbReference type="InterPro" id="IPR045864">
    <property type="entry name" value="aa-tRNA-synth_II/BPL/LPL"/>
</dbReference>
<dbReference type="InterPro" id="IPR004529">
    <property type="entry name" value="Phe-tRNA-synth_IIc_asu"/>
</dbReference>
<dbReference type="InterPro" id="IPR004188">
    <property type="entry name" value="Phe-tRNA_ligase_II_N"/>
</dbReference>
<dbReference type="InterPro" id="IPR022911">
    <property type="entry name" value="Phe_tRNA_ligase_alpha1_bac"/>
</dbReference>
<dbReference type="InterPro" id="IPR002319">
    <property type="entry name" value="Phenylalanyl-tRNA_Synthase"/>
</dbReference>
<dbReference type="InterPro" id="IPR010978">
    <property type="entry name" value="tRNA-bd_arm"/>
</dbReference>
<dbReference type="NCBIfam" id="TIGR00468">
    <property type="entry name" value="pheS"/>
    <property type="match status" value="1"/>
</dbReference>
<dbReference type="PANTHER" id="PTHR11538:SF41">
    <property type="entry name" value="PHENYLALANINE--TRNA LIGASE, MITOCHONDRIAL"/>
    <property type="match status" value="1"/>
</dbReference>
<dbReference type="PANTHER" id="PTHR11538">
    <property type="entry name" value="PHENYLALANYL-TRNA SYNTHETASE"/>
    <property type="match status" value="1"/>
</dbReference>
<dbReference type="Pfam" id="PF02912">
    <property type="entry name" value="Phe_tRNA-synt_N"/>
    <property type="match status" value="1"/>
</dbReference>
<dbReference type="Pfam" id="PF01409">
    <property type="entry name" value="tRNA-synt_2d"/>
    <property type="match status" value="1"/>
</dbReference>
<dbReference type="SUPFAM" id="SSF55681">
    <property type="entry name" value="Class II aaRS and biotin synthetases"/>
    <property type="match status" value="1"/>
</dbReference>
<dbReference type="SUPFAM" id="SSF46589">
    <property type="entry name" value="tRNA-binding arm"/>
    <property type="match status" value="1"/>
</dbReference>
<dbReference type="PROSITE" id="PS50862">
    <property type="entry name" value="AA_TRNA_LIGASE_II"/>
    <property type="match status" value="1"/>
</dbReference>
<protein>
    <recommendedName>
        <fullName evidence="1">Phenylalanine--tRNA ligase alpha subunit</fullName>
        <ecNumber evidence="1">6.1.1.20</ecNumber>
    </recommendedName>
    <alternativeName>
        <fullName evidence="1">Phenylalanyl-tRNA synthetase alpha subunit</fullName>
        <shortName evidence="1">PheRS</shortName>
    </alternativeName>
</protein>
<feature type="chain" id="PRO_1000114896" description="Phenylalanine--tRNA ligase alpha subunit">
    <location>
        <begin position="1"/>
        <end position="342"/>
    </location>
</feature>
<feature type="binding site" evidence="1">
    <location>
        <position position="255"/>
    </location>
    <ligand>
        <name>Mg(2+)</name>
        <dbReference type="ChEBI" id="CHEBI:18420"/>
        <note>shared with beta subunit</note>
    </ligand>
</feature>
<keyword id="KW-0030">Aminoacyl-tRNA synthetase</keyword>
<keyword id="KW-0067">ATP-binding</keyword>
<keyword id="KW-0963">Cytoplasm</keyword>
<keyword id="KW-0436">Ligase</keyword>
<keyword id="KW-0460">Magnesium</keyword>
<keyword id="KW-0479">Metal-binding</keyword>
<keyword id="KW-0547">Nucleotide-binding</keyword>
<keyword id="KW-0648">Protein biosynthesis</keyword>
<keyword id="KW-1185">Reference proteome</keyword>
<sequence>MENTIRSLQQEIIDFEITTAADLEAFRLRYTVRKGLIAALFGQLKTVEPAEKPRMGQLLNQLKQTADAKLTEAEERLAGTESKSSSNRIDLTLPGRRYFTGSEHPVQKVLGEMKSIFSAMGFGIATGPELETDQYNFDLLNFPPDHPARDMQDTFFVTSGNPGSDVLLRTHTSPVQIRVMLDQKPPIRVICPGKVYRNEAISSRSYCVFHQLEGLYIDKKVSFADLKATIYSFAKQMFGTDVKLRFRPSFFPFTEPSAEVDVTCYLCGGKGCKVCKKSGWLEIMGCGMVHPNVMRNCGIDPEEWSGYAFGMGVDRTVLLRYKIDDIRLLFENDLRMLKQFTA</sequence>
<name>SYFA_PELPB</name>
<reference key="1">
    <citation type="submission" date="2008-06" db="EMBL/GenBank/DDBJ databases">
        <title>Complete sequence of Pelodictyon phaeoclathratiforme BU-1.</title>
        <authorList>
            <consortium name="US DOE Joint Genome Institute"/>
            <person name="Lucas S."/>
            <person name="Copeland A."/>
            <person name="Lapidus A."/>
            <person name="Glavina del Rio T."/>
            <person name="Dalin E."/>
            <person name="Tice H."/>
            <person name="Bruce D."/>
            <person name="Goodwin L."/>
            <person name="Pitluck S."/>
            <person name="Schmutz J."/>
            <person name="Larimer F."/>
            <person name="Land M."/>
            <person name="Hauser L."/>
            <person name="Kyrpides N."/>
            <person name="Mikhailova N."/>
            <person name="Liu Z."/>
            <person name="Li T."/>
            <person name="Zhao F."/>
            <person name="Overmann J."/>
            <person name="Bryant D.A."/>
            <person name="Richardson P."/>
        </authorList>
    </citation>
    <scope>NUCLEOTIDE SEQUENCE [LARGE SCALE GENOMIC DNA]</scope>
    <source>
        <strain>DSM 5477 / BU-1</strain>
    </source>
</reference>
<proteinExistence type="inferred from homology"/>
<organism>
    <name type="scientific">Pelodictyon phaeoclathratiforme (strain DSM 5477 / BU-1)</name>
    <dbReference type="NCBI Taxonomy" id="324925"/>
    <lineage>
        <taxon>Bacteria</taxon>
        <taxon>Pseudomonadati</taxon>
        <taxon>Chlorobiota</taxon>
        <taxon>Chlorobiia</taxon>
        <taxon>Chlorobiales</taxon>
        <taxon>Chlorobiaceae</taxon>
        <taxon>Chlorobium/Pelodictyon group</taxon>
        <taxon>Pelodictyon</taxon>
    </lineage>
</organism>
<comment type="catalytic activity">
    <reaction evidence="1">
        <text>tRNA(Phe) + L-phenylalanine + ATP = L-phenylalanyl-tRNA(Phe) + AMP + diphosphate + H(+)</text>
        <dbReference type="Rhea" id="RHEA:19413"/>
        <dbReference type="Rhea" id="RHEA-COMP:9668"/>
        <dbReference type="Rhea" id="RHEA-COMP:9699"/>
        <dbReference type="ChEBI" id="CHEBI:15378"/>
        <dbReference type="ChEBI" id="CHEBI:30616"/>
        <dbReference type="ChEBI" id="CHEBI:33019"/>
        <dbReference type="ChEBI" id="CHEBI:58095"/>
        <dbReference type="ChEBI" id="CHEBI:78442"/>
        <dbReference type="ChEBI" id="CHEBI:78531"/>
        <dbReference type="ChEBI" id="CHEBI:456215"/>
        <dbReference type="EC" id="6.1.1.20"/>
    </reaction>
</comment>
<comment type="cofactor">
    <cofactor evidence="1">
        <name>Mg(2+)</name>
        <dbReference type="ChEBI" id="CHEBI:18420"/>
    </cofactor>
    <text evidence="1">Binds 2 magnesium ions per tetramer.</text>
</comment>
<comment type="subunit">
    <text evidence="1">Tetramer of two alpha and two beta subunits.</text>
</comment>
<comment type="subcellular location">
    <subcellularLocation>
        <location evidence="1">Cytoplasm</location>
    </subcellularLocation>
</comment>
<comment type="similarity">
    <text evidence="1">Belongs to the class-II aminoacyl-tRNA synthetase family. Phe-tRNA synthetase alpha subunit type 1 subfamily.</text>
</comment>
<evidence type="ECO:0000255" key="1">
    <source>
        <dbReference type="HAMAP-Rule" id="MF_00281"/>
    </source>
</evidence>